<comment type="function">
    <text evidence="1">May function as a transcriptional repressor.</text>
</comment>
<comment type="subcellular location">
    <subcellularLocation>
        <location evidence="1">Nucleus</location>
    </subcellularLocation>
</comment>
<comment type="similarity">
    <text evidence="4">Belongs to the Elbow/Noc family.</text>
</comment>
<keyword id="KW-0479">Metal-binding</keyword>
<keyword id="KW-0539">Nucleus</keyword>
<keyword id="KW-1185">Reference proteome</keyword>
<keyword id="KW-0678">Repressor</keyword>
<keyword id="KW-0804">Transcription</keyword>
<keyword id="KW-0805">Transcription regulation</keyword>
<keyword id="KW-0862">Zinc</keyword>
<keyword id="KW-0863">Zinc-finger</keyword>
<gene>
    <name type="primary">znf503</name>
</gene>
<dbReference type="EMBL" id="BC124040">
    <property type="protein sequence ID" value="AAI24041.1"/>
    <property type="molecule type" value="mRNA"/>
</dbReference>
<dbReference type="RefSeq" id="NP_001072698.1">
    <property type="nucleotide sequence ID" value="NM_001079230.1"/>
</dbReference>
<dbReference type="FunCoup" id="Q05AQ8">
    <property type="interactions" value="1150"/>
</dbReference>
<dbReference type="PaxDb" id="8364-ENSXETP00000021723"/>
<dbReference type="DNASU" id="780155"/>
<dbReference type="GeneID" id="780155"/>
<dbReference type="KEGG" id="xtr:780155"/>
<dbReference type="AGR" id="Xenbase:XB-GENE-1005005"/>
<dbReference type="CTD" id="84858"/>
<dbReference type="Xenbase" id="XB-GENE-1005005">
    <property type="gene designation" value="znf503"/>
</dbReference>
<dbReference type="eggNOG" id="ENOG502QUYV">
    <property type="taxonomic scope" value="Eukaryota"/>
</dbReference>
<dbReference type="HOGENOM" id="CLU_035082_1_0_1"/>
<dbReference type="InParanoid" id="Q05AQ8"/>
<dbReference type="OMA" id="SDICVAW"/>
<dbReference type="OrthoDB" id="10054079at2759"/>
<dbReference type="PhylomeDB" id="Q05AQ8"/>
<dbReference type="TreeFam" id="TF324968"/>
<dbReference type="Proteomes" id="UP000008143">
    <property type="component" value="Chromosome 7"/>
</dbReference>
<dbReference type="Bgee" id="ENSXETG00000009866">
    <property type="expression patterns" value="Expressed in neurula embryo and 12 other cell types or tissues"/>
</dbReference>
<dbReference type="GO" id="GO:0005634">
    <property type="term" value="C:nucleus"/>
    <property type="evidence" value="ECO:0007669"/>
    <property type="project" value="UniProtKB-SubCell"/>
</dbReference>
<dbReference type="GO" id="GO:0008270">
    <property type="term" value="F:zinc ion binding"/>
    <property type="evidence" value="ECO:0007669"/>
    <property type="project" value="UniProtKB-KW"/>
</dbReference>
<dbReference type="GO" id="GO:0048596">
    <property type="term" value="P:embryonic camera-type eye morphogenesis"/>
    <property type="evidence" value="ECO:0007669"/>
    <property type="project" value="Ensembl"/>
</dbReference>
<dbReference type="GO" id="GO:0030902">
    <property type="term" value="P:hindbrain development"/>
    <property type="evidence" value="ECO:0007669"/>
    <property type="project" value="Ensembl"/>
</dbReference>
<dbReference type="FunFam" id="3.30.160.60:FF:000129">
    <property type="entry name" value="Zinc finger protein 503"/>
    <property type="match status" value="1"/>
</dbReference>
<dbReference type="Gene3D" id="3.30.160.60">
    <property type="entry name" value="Classic Zinc Finger"/>
    <property type="match status" value="1"/>
</dbReference>
<dbReference type="InterPro" id="IPR051520">
    <property type="entry name" value="Elbow/Noc_ZnFinger"/>
</dbReference>
<dbReference type="InterPro" id="IPR022129">
    <property type="entry name" value="Tscrpt_rep_NocA-like"/>
</dbReference>
<dbReference type="InterPro" id="IPR013087">
    <property type="entry name" value="Znf_C2H2_type"/>
</dbReference>
<dbReference type="PANTHER" id="PTHR12522:SF3">
    <property type="entry name" value="ZINC FINGER PROTEIN 503"/>
    <property type="match status" value="1"/>
</dbReference>
<dbReference type="PANTHER" id="PTHR12522">
    <property type="entry name" value="ZINC-FINGER PROTEIN NOLZ1-RELATED"/>
    <property type="match status" value="1"/>
</dbReference>
<dbReference type="Pfam" id="PF12402">
    <property type="entry name" value="nlz1"/>
    <property type="match status" value="1"/>
</dbReference>
<dbReference type="PROSITE" id="PS50157">
    <property type="entry name" value="ZINC_FINGER_C2H2_2"/>
    <property type="match status" value="1"/>
</dbReference>
<organism>
    <name type="scientific">Xenopus tropicalis</name>
    <name type="common">Western clawed frog</name>
    <name type="synonym">Silurana tropicalis</name>
    <dbReference type="NCBI Taxonomy" id="8364"/>
    <lineage>
        <taxon>Eukaryota</taxon>
        <taxon>Metazoa</taxon>
        <taxon>Chordata</taxon>
        <taxon>Craniata</taxon>
        <taxon>Vertebrata</taxon>
        <taxon>Euteleostomi</taxon>
        <taxon>Amphibia</taxon>
        <taxon>Batrachia</taxon>
        <taxon>Anura</taxon>
        <taxon>Pipoidea</taxon>
        <taxon>Pipidae</taxon>
        <taxon>Xenopodinae</taxon>
        <taxon>Xenopus</taxon>
        <taxon>Silurana</taxon>
    </lineage>
</organism>
<sequence length="541" mass="55930">MSNSPLGSGSRISHFTTESTDRGDERASFSSRAFIHTVPPSDPQRQAGRLPIKVLKMLTARGGHILHPEYLQPLPSTPVSPIELDAKKSPLALLAQTCSQIGKPDPAPSKLSAVTGSSASGDKESKSVPLKLSDIGAEDKSSFKPYSKHPDKKDQSASDKSGFRVPSAACPPFTPRTGSPGSPRTPPPPSEPKASSECTDKKEMEQCAKTAPPDGSAHGRLSTELTHSEGTAGCKSLSAAPSPTPASSSSSSSSVLGSGLVAPVSPYKPGHTVFPLPPASMSYPATLAGAYAGYPPQFLAHGVSLDPSKGSSLVGAQLSTLGCTGKSAASSPLTGASPPSVMTASLCRDPYCLSYHCASQLGAGATCAHDLKSGYPLVYPSHALHGVSPPSLPGHPLYPYGFMLPNDPLPHVCNWVSATGPCDKRFSSSEELLGHLRTHTAFPGATDKLLPGYPSSSSLAAAAMACHMHMPPTGASPGPLTLRSPHHHPLGLSSSRYHPYSKSPLPSGGAPVPMPAATGHYYSPYALYGQRLTTASALGYQ</sequence>
<reference key="1">
    <citation type="submission" date="2006-09" db="EMBL/GenBank/DDBJ databases">
        <authorList>
            <consortium name="NIH - Xenopus Gene Collection (XGC) project"/>
        </authorList>
    </citation>
    <scope>NUCLEOTIDE SEQUENCE [LARGE SCALE MRNA]</scope>
    <source>
        <strain>N6</strain>
        <tissue>Oviduct</tissue>
    </source>
</reference>
<evidence type="ECO:0000250" key="1"/>
<evidence type="ECO:0000255" key="2">
    <source>
        <dbReference type="PROSITE-ProRule" id="PRU00042"/>
    </source>
</evidence>
<evidence type="ECO:0000256" key="3">
    <source>
        <dbReference type="SAM" id="MobiDB-lite"/>
    </source>
</evidence>
<evidence type="ECO:0000305" key="4"/>
<accession>Q05AQ8</accession>
<proteinExistence type="evidence at transcript level"/>
<protein>
    <recommendedName>
        <fullName>Zinc finger protein 503</fullName>
    </recommendedName>
</protein>
<name>ZN503_XENTR</name>
<feature type="chain" id="PRO_0000292207" description="Zinc finger protein 503">
    <location>
        <begin position="1"/>
        <end position="541"/>
    </location>
</feature>
<feature type="zinc finger region" description="C2H2-type" evidence="2">
    <location>
        <begin position="411"/>
        <end position="439"/>
    </location>
</feature>
<feature type="region of interest" description="Disordered" evidence="3">
    <location>
        <begin position="1"/>
        <end position="49"/>
    </location>
</feature>
<feature type="region of interest" description="Disordered" evidence="3">
    <location>
        <begin position="97"/>
        <end position="255"/>
    </location>
</feature>
<feature type="region of interest" description="Disordered" evidence="3">
    <location>
        <begin position="474"/>
        <end position="511"/>
    </location>
</feature>
<feature type="compositionally biased region" description="Polar residues" evidence="3">
    <location>
        <begin position="1"/>
        <end position="18"/>
    </location>
</feature>
<feature type="compositionally biased region" description="Basic and acidic residues" evidence="3">
    <location>
        <begin position="137"/>
        <end position="157"/>
    </location>
</feature>
<feature type="compositionally biased region" description="Low complexity" evidence="3">
    <location>
        <begin position="236"/>
        <end position="255"/>
    </location>
</feature>